<sequence length="471" mass="52937">MQVTETLNEGLKREIKVVVPAGDLEAKLAERLETARGRARINGFRPGKVPTAHLRKMYGKSFMAEIVNEILNDSSRSILAERNEKSATQPEVIMSEDEKEAEKVLDGKADFVFSLNYEVLPAIEVKDFSKIAVTREVVDISDEEVDEQVKRIASSTRTFETKKGKAENEDRVTIDYLGKLDGEPFEGGADNDAQLVLGSGQFIPGFEEQLIGLKAGDEKVITVTFPAEYGAAHLAGKEATFDIKVKEVAKPNELVLDDETAKKLGIESLERLRQVVREQIESQYGQITRQKVKRQILDALDGDYQFETPQKLVDAEFNNIWQQINFDLQQAGRTFEDEETTEEAAREEYRKLAERRVRLGLVLSEIGEKAGVEVTEEELQRAVYDQVRRYPGQEKEIYDFLRRTPDAVANLRAPIFEEKVVDHLLANINVTDKKVSKEELTAEDEDAASEAKPAKKAAAKKKAEEGKSEEA</sequence>
<protein>
    <recommendedName>
        <fullName evidence="1">Trigger factor</fullName>
        <shortName evidence="1">TF</shortName>
        <ecNumber evidence="1">5.2.1.8</ecNumber>
    </recommendedName>
    <alternativeName>
        <fullName evidence="1">PPIase</fullName>
    </alternativeName>
</protein>
<name>TIG_BRUA1</name>
<organism>
    <name type="scientific">Brucella abortus (strain S19)</name>
    <dbReference type="NCBI Taxonomy" id="430066"/>
    <lineage>
        <taxon>Bacteria</taxon>
        <taxon>Pseudomonadati</taxon>
        <taxon>Pseudomonadota</taxon>
        <taxon>Alphaproteobacteria</taxon>
        <taxon>Hyphomicrobiales</taxon>
        <taxon>Brucellaceae</taxon>
        <taxon>Brucella/Ochrobactrum group</taxon>
        <taxon>Brucella</taxon>
    </lineage>
</organism>
<comment type="function">
    <text evidence="1">Involved in protein export. Acts as a chaperone by maintaining the newly synthesized protein in an open conformation. Functions as a peptidyl-prolyl cis-trans isomerase.</text>
</comment>
<comment type="catalytic activity">
    <reaction evidence="1">
        <text>[protein]-peptidylproline (omega=180) = [protein]-peptidylproline (omega=0)</text>
        <dbReference type="Rhea" id="RHEA:16237"/>
        <dbReference type="Rhea" id="RHEA-COMP:10747"/>
        <dbReference type="Rhea" id="RHEA-COMP:10748"/>
        <dbReference type="ChEBI" id="CHEBI:83833"/>
        <dbReference type="ChEBI" id="CHEBI:83834"/>
        <dbReference type="EC" id="5.2.1.8"/>
    </reaction>
</comment>
<comment type="subcellular location">
    <subcellularLocation>
        <location>Cytoplasm</location>
    </subcellularLocation>
    <text evidence="1">About half TF is bound to the ribosome near the polypeptide exit tunnel while the other half is free in the cytoplasm.</text>
</comment>
<comment type="domain">
    <text evidence="1">Consists of 3 domains; the N-terminus binds the ribosome, the middle domain has PPIase activity, while the C-terminus has intrinsic chaperone activity on its own.</text>
</comment>
<comment type="similarity">
    <text evidence="1">Belongs to the FKBP-type PPIase family. Tig subfamily.</text>
</comment>
<accession>B2S5D1</accession>
<feature type="chain" id="PRO_1000115506" description="Trigger factor">
    <location>
        <begin position="1"/>
        <end position="471"/>
    </location>
</feature>
<feature type="domain" description="PPIase FKBP-type" evidence="1">
    <location>
        <begin position="169"/>
        <end position="254"/>
    </location>
</feature>
<feature type="region of interest" description="Disordered" evidence="2">
    <location>
        <begin position="435"/>
        <end position="471"/>
    </location>
</feature>
<feature type="compositionally biased region" description="Basic and acidic residues" evidence="2">
    <location>
        <begin position="461"/>
        <end position="471"/>
    </location>
</feature>
<keyword id="KW-0131">Cell cycle</keyword>
<keyword id="KW-0132">Cell division</keyword>
<keyword id="KW-0143">Chaperone</keyword>
<keyword id="KW-0963">Cytoplasm</keyword>
<keyword id="KW-0413">Isomerase</keyword>
<keyword id="KW-0697">Rotamase</keyword>
<reference key="1">
    <citation type="journal article" date="2008" name="PLoS ONE">
        <title>Genome sequence of Brucella abortus vaccine strain S19 compared to virulent strains yields candidate virulence genes.</title>
        <authorList>
            <person name="Crasta O.R."/>
            <person name="Folkerts O."/>
            <person name="Fei Z."/>
            <person name="Mane S.P."/>
            <person name="Evans C."/>
            <person name="Martino-Catt S."/>
            <person name="Bricker B."/>
            <person name="Yu G."/>
            <person name="Du L."/>
            <person name="Sobral B.W."/>
        </authorList>
    </citation>
    <scope>NUCLEOTIDE SEQUENCE [LARGE SCALE GENOMIC DNA]</scope>
    <source>
        <strain>S19</strain>
    </source>
</reference>
<gene>
    <name evidence="1" type="primary">tig</name>
    <name type="ordered locus">BAbS19_I08570</name>
</gene>
<proteinExistence type="inferred from homology"/>
<evidence type="ECO:0000255" key="1">
    <source>
        <dbReference type="HAMAP-Rule" id="MF_00303"/>
    </source>
</evidence>
<evidence type="ECO:0000256" key="2">
    <source>
        <dbReference type="SAM" id="MobiDB-lite"/>
    </source>
</evidence>
<dbReference type="EC" id="5.2.1.8" evidence="1"/>
<dbReference type="EMBL" id="CP000887">
    <property type="protein sequence ID" value="ACD72378.1"/>
    <property type="molecule type" value="Genomic_DNA"/>
</dbReference>
<dbReference type="SMR" id="B2S5D1"/>
<dbReference type="KEGG" id="bmc:BAbS19_I08570"/>
<dbReference type="HOGENOM" id="CLU_033058_2_2_5"/>
<dbReference type="Proteomes" id="UP000002565">
    <property type="component" value="Chromosome 1"/>
</dbReference>
<dbReference type="GO" id="GO:0005737">
    <property type="term" value="C:cytoplasm"/>
    <property type="evidence" value="ECO:0007669"/>
    <property type="project" value="UniProtKB-SubCell"/>
</dbReference>
<dbReference type="GO" id="GO:0003755">
    <property type="term" value="F:peptidyl-prolyl cis-trans isomerase activity"/>
    <property type="evidence" value="ECO:0007669"/>
    <property type="project" value="UniProtKB-UniRule"/>
</dbReference>
<dbReference type="GO" id="GO:0044183">
    <property type="term" value="F:protein folding chaperone"/>
    <property type="evidence" value="ECO:0007669"/>
    <property type="project" value="TreeGrafter"/>
</dbReference>
<dbReference type="GO" id="GO:0043022">
    <property type="term" value="F:ribosome binding"/>
    <property type="evidence" value="ECO:0007669"/>
    <property type="project" value="TreeGrafter"/>
</dbReference>
<dbReference type="GO" id="GO:0051083">
    <property type="term" value="P:'de novo' cotranslational protein folding"/>
    <property type="evidence" value="ECO:0007669"/>
    <property type="project" value="TreeGrafter"/>
</dbReference>
<dbReference type="GO" id="GO:0051301">
    <property type="term" value="P:cell division"/>
    <property type="evidence" value="ECO:0007669"/>
    <property type="project" value="UniProtKB-KW"/>
</dbReference>
<dbReference type="GO" id="GO:0061077">
    <property type="term" value="P:chaperone-mediated protein folding"/>
    <property type="evidence" value="ECO:0007669"/>
    <property type="project" value="TreeGrafter"/>
</dbReference>
<dbReference type="GO" id="GO:0015031">
    <property type="term" value="P:protein transport"/>
    <property type="evidence" value="ECO:0007669"/>
    <property type="project" value="UniProtKB-UniRule"/>
</dbReference>
<dbReference type="GO" id="GO:0043335">
    <property type="term" value="P:protein unfolding"/>
    <property type="evidence" value="ECO:0007669"/>
    <property type="project" value="TreeGrafter"/>
</dbReference>
<dbReference type="FunFam" id="3.10.50.40:FF:000001">
    <property type="entry name" value="Trigger factor"/>
    <property type="match status" value="1"/>
</dbReference>
<dbReference type="Gene3D" id="3.10.50.40">
    <property type="match status" value="1"/>
</dbReference>
<dbReference type="Gene3D" id="3.30.70.1050">
    <property type="entry name" value="Trigger factor ribosome-binding domain"/>
    <property type="match status" value="1"/>
</dbReference>
<dbReference type="Gene3D" id="1.10.3120.10">
    <property type="entry name" value="Trigger factor, C-terminal domain"/>
    <property type="match status" value="1"/>
</dbReference>
<dbReference type="HAMAP" id="MF_00303">
    <property type="entry name" value="Trigger_factor_Tig"/>
    <property type="match status" value="1"/>
</dbReference>
<dbReference type="InterPro" id="IPR046357">
    <property type="entry name" value="PPIase_dom_sf"/>
</dbReference>
<dbReference type="InterPro" id="IPR001179">
    <property type="entry name" value="PPIase_FKBP_dom"/>
</dbReference>
<dbReference type="InterPro" id="IPR005215">
    <property type="entry name" value="Trig_fac"/>
</dbReference>
<dbReference type="InterPro" id="IPR008880">
    <property type="entry name" value="Trigger_fac_C"/>
</dbReference>
<dbReference type="InterPro" id="IPR037041">
    <property type="entry name" value="Trigger_fac_C_sf"/>
</dbReference>
<dbReference type="InterPro" id="IPR008881">
    <property type="entry name" value="Trigger_fac_ribosome-bd_bac"/>
</dbReference>
<dbReference type="InterPro" id="IPR036611">
    <property type="entry name" value="Trigger_fac_ribosome-bd_sf"/>
</dbReference>
<dbReference type="InterPro" id="IPR027304">
    <property type="entry name" value="Trigger_fact/SurA_dom_sf"/>
</dbReference>
<dbReference type="NCBIfam" id="TIGR00115">
    <property type="entry name" value="tig"/>
    <property type="match status" value="1"/>
</dbReference>
<dbReference type="PANTHER" id="PTHR30560">
    <property type="entry name" value="TRIGGER FACTOR CHAPERONE AND PEPTIDYL-PROLYL CIS/TRANS ISOMERASE"/>
    <property type="match status" value="1"/>
</dbReference>
<dbReference type="PANTHER" id="PTHR30560:SF3">
    <property type="entry name" value="TRIGGER FACTOR-LIKE PROTEIN TIG, CHLOROPLASTIC"/>
    <property type="match status" value="1"/>
</dbReference>
<dbReference type="Pfam" id="PF00254">
    <property type="entry name" value="FKBP_C"/>
    <property type="match status" value="1"/>
</dbReference>
<dbReference type="Pfam" id="PF05698">
    <property type="entry name" value="Trigger_C"/>
    <property type="match status" value="1"/>
</dbReference>
<dbReference type="Pfam" id="PF05697">
    <property type="entry name" value="Trigger_N"/>
    <property type="match status" value="1"/>
</dbReference>
<dbReference type="PIRSF" id="PIRSF003095">
    <property type="entry name" value="Trigger_factor"/>
    <property type="match status" value="1"/>
</dbReference>
<dbReference type="SUPFAM" id="SSF54534">
    <property type="entry name" value="FKBP-like"/>
    <property type="match status" value="1"/>
</dbReference>
<dbReference type="SUPFAM" id="SSF109998">
    <property type="entry name" value="Triger factor/SurA peptide-binding domain-like"/>
    <property type="match status" value="1"/>
</dbReference>
<dbReference type="SUPFAM" id="SSF102735">
    <property type="entry name" value="Trigger factor ribosome-binding domain"/>
    <property type="match status" value="1"/>
</dbReference>
<dbReference type="PROSITE" id="PS50059">
    <property type="entry name" value="FKBP_PPIASE"/>
    <property type="match status" value="1"/>
</dbReference>